<protein>
    <recommendedName>
        <fullName evidence="1">Translation initiation factor 5A</fullName>
    </recommendedName>
    <alternativeName>
        <fullName evidence="1">Hypusine-containing protein</fullName>
    </alternativeName>
    <alternativeName>
        <fullName evidence="1">eIF-5A</fullName>
    </alternativeName>
</protein>
<organism>
    <name type="scientific">Methanococcus maripaludis (strain C6 / ATCC BAA-1332)</name>
    <dbReference type="NCBI Taxonomy" id="444158"/>
    <lineage>
        <taxon>Archaea</taxon>
        <taxon>Methanobacteriati</taxon>
        <taxon>Methanobacteriota</taxon>
        <taxon>Methanomada group</taxon>
        <taxon>Methanococci</taxon>
        <taxon>Methanococcales</taxon>
        <taxon>Methanococcaceae</taxon>
        <taxon>Methanococcus</taxon>
    </lineage>
</organism>
<name>IF5A_METM6</name>
<dbReference type="EMBL" id="CP000867">
    <property type="protein sequence ID" value="ABX02515.1"/>
    <property type="molecule type" value="Genomic_DNA"/>
</dbReference>
<dbReference type="SMR" id="A9AAZ2"/>
<dbReference type="STRING" id="444158.MmarC6_1703"/>
<dbReference type="KEGG" id="mmx:MmarC6_1703"/>
<dbReference type="eggNOG" id="arCOG04277">
    <property type="taxonomic scope" value="Archaea"/>
</dbReference>
<dbReference type="HOGENOM" id="CLU_102600_3_0_2"/>
<dbReference type="OrthoDB" id="23689at2157"/>
<dbReference type="PhylomeDB" id="A9AAZ2"/>
<dbReference type="GO" id="GO:0005737">
    <property type="term" value="C:cytoplasm"/>
    <property type="evidence" value="ECO:0007669"/>
    <property type="project" value="UniProtKB-SubCell"/>
</dbReference>
<dbReference type="GO" id="GO:0043022">
    <property type="term" value="F:ribosome binding"/>
    <property type="evidence" value="ECO:0007669"/>
    <property type="project" value="InterPro"/>
</dbReference>
<dbReference type="GO" id="GO:0003723">
    <property type="term" value="F:RNA binding"/>
    <property type="evidence" value="ECO:0007669"/>
    <property type="project" value="InterPro"/>
</dbReference>
<dbReference type="GO" id="GO:0003746">
    <property type="term" value="F:translation elongation factor activity"/>
    <property type="evidence" value="ECO:0007669"/>
    <property type="project" value="InterPro"/>
</dbReference>
<dbReference type="GO" id="GO:0003743">
    <property type="term" value="F:translation initiation factor activity"/>
    <property type="evidence" value="ECO:0007669"/>
    <property type="project" value="UniProtKB-UniRule"/>
</dbReference>
<dbReference type="GO" id="GO:0045901">
    <property type="term" value="P:positive regulation of translational elongation"/>
    <property type="evidence" value="ECO:0007669"/>
    <property type="project" value="InterPro"/>
</dbReference>
<dbReference type="GO" id="GO:0045905">
    <property type="term" value="P:positive regulation of translational termination"/>
    <property type="evidence" value="ECO:0007669"/>
    <property type="project" value="InterPro"/>
</dbReference>
<dbReference type="CDD" id="cd04467">
    <property type="entry name" value="S1_aIF5A"/>
    <property type="match status" value="1"/>
</dbReference>
<dbReference type="Gene3D" id="2.30.30.30">
    <property type="match status" value="1"/>
</dbReference>
<dbReference type="Gene3D" id="2.40.50.140">
    <property type="entry name" value="Nucleic acid-binding proteins"/>
    <property type="match status" value="1"/>
</dbReference>
<dbReference type="HAMAP" id="MF_00085">
    <property type="entry name" value="eIF_5A"/>
    <property type="match status" value="1"/>
</dbReference>
<dbReference type="InterPro" id="IPR001884">
    <property type="entry name" value="IF5A-like"/>
</dbReference>
<dbReference type="InterPro" id="IPR048670">
    <property type="entry name" value="IF5A-like_N"/>
</dbReference>
<dbReference type="InterPro" id="IPR012340">
    <property type="entry name" value="NA-bd_OB-fold"/>
</dbReference>
<dbReference type="InterPro" id="IPR014722">
    <property type="entry name" value="Rib_uL2_dom2"/>
</dbReference>
<dbReference type="InterPro" id="IPR019769">
    <property type="entry name" value="Trans_elong_IF5A_hypusine_site"/>
</dbReference>
<dbReference type="InterPro" id="IPR022847">
    <property type="entry name" value="Transl_elong_IF5A_arc"/>
</dbReference>
<dbReference type="InterPro" id="IPR020189">
    <property type="entry name" value="Transl_elong_IF5A_C"/>
</dbReference>
<dbReference type="InterPro" id="IPR008991">
    <property type="entry name" value="Translation_prot_SH3-like_sf"/>
</dbReference>
<dbReference type="NCBIfam" id="TIGR00037">
    <property type="entry name" value="eIF_5A"/>
    <property type="match status" value="1"/>
</dbReference>
<dbReference type="NCBIfam" id="NF003076">
    <property type="entry name" value="PRK03999.1"/>
    <property type="match status" value="1"/>
</dbReference>
<dbReference type="PANTHER" id="PTHR11673">
    <property type="entry name" value="TRANSLATION INITIATION FACTOR 5A FAMILY MEMBER"/>
    <property type="match status" value="1"/>
</dbReference>
<dbReference type="Pfam" id="PF01287">
    <property type="entry name" value="eIF-5a"/>
    <property type="match status" value="1"/>
</dbReference>
<dbReference type="Pfam" id="PF21485">
    <property type="entry name" value="IF5A-like_N"/>
    <property type="match status" value="1"/>
</dbReference>
<dbReference type="PIRSF" id="PIRSF003025">
    <property type="entry name" value="eIF5A"/>
    <property type="match status" value="1"/>
</dbReference>
<dbReference type="SMART" id="SM01376">
    <property type="entry name" value="eIF-5a"/>
    <property type="match status" value="1"/>
</dbReference>
<dbReference type="SUPFAM" id="SSF50249">
    <property type="entry name" value="Nucleic acid-binding proteins"/>
    <property type="match status" value="1"/>
</dbReference>
<dbReference type="SUPFAM" id="SSF50104">
    <property type="entry name" value="Translation proteins SH3-like domain"/>
    <property type="match status" value="1"/>
</dbReference>
<dbReference type="PROSITE" id="PS00302">
    <property type="entry name" value="IF5A_HYPUSINE"/>
    <property type="match status" value="1"/>
</dbReference>
<proteinExistence type="inferred from homology"/>
<comment type="function">
    <text evidence="1">Functions by promoting the formation of the first peptide bond.</text>
</comment>
<comment type="subcellular location">
    <subcellularLocation>
        <location evidence="1">Cytoplasm</location>
    </subcellularLocation>
</comment>
<comment type="similarity">
    <text evidence="1">Belongs to the eIF-5A family.</text>
</comment>
<gene>
    <name type="primary">eIF5A</name>
    <name type="ordered locus">MmarC6_1703</name>
</gene>
<sequence>MAGTKPGDLGGIKVGQYIVIDGIACKVMDYAHSKPGKHGGAKVRLVAVGIFEPVKKEHVGPASSRIDIPIIDKRKGQVLALMGDNVQLMDMESYETLEIPMPDDVEGIESGVEVEYFEAMDRYKITRVISK</sequence>
<accession>A9AAZ2</accession>
<keyword id="KW-0963">Cytoplasm</keyword>
<keyword id="KW-0385">Hypusine</keyword>
<keyword id="KW-0396">Initiation factor</keyword>
<keyword id="KW-0648">Protein biosynthesis</keyword>
<evidence type="ECO:0000255" key="1">
    <source>
        <dbReference type="HAMAP-Rule" id="MF_00085"/>
    </source>
</evidence>
<feature type="chain" id="PRO_1000093009" description="Translation initiation factor 5A">
    <location>
        <begin position="1"/>
        <end position="131"/>
    </location>
</feature>
<feature type="modified residue" description="Hypusine" evidence="1">
    <location>
        <position position="37"/>
    </location>
</feature>
<reference key="1">
    <citation type="submission" date="2007-10" db="EMBL/GenBank/DDBJ databases">
        <title>Complete sequence of Methanococcus maripaludis C6.</title>
        <authorList>
            <consortium name="US DOE Joint Genome Institute"/>
            <person name="Copeland A."/>
            <person name="Lucas S."/>
            <person name="Lapidus A."/>
            <person name="Barry K."/>
            <person name="Glavina del Rio T."/>
            <person name="Dalin E."/>
            <person name="Tice H."/>
            <person name="Pitluck S."/>
            <person name="Clum A."/>
            <person name="Schmutz J."/>
            <person name="Larimer F."/>
            <person name="Land M."/>
            <person name="Hauser L."/>
            <person name="Kyrpides N."/>
            <person name="Mikhailova N."/>
            <person name="Sieprawska-Lupa M."/>
            <person name="Whitman W.B."/>
            <person name="Richardson P."/>
        </authorList>
    </citation>
    <scope>NUCLEOTIDE SEQUENCE [LARGE SCALE GENOMIC DNA]</scope>
    <source>
        <strain>C6 / ATCC BAA-1332</strain>
    </source>
</reference>